<name>SECA1_BORA1</name>
<organism>
    <name type="scientific">Bordetella avium (strain 197N)</name>
    <dbReference type="NCBI Taxonomy" id="360910"/>
    <lineage>
        <taxon>Bacteria</taxon>
        <taxon>Pseudomonadati</taxon>
        <taxon>Pseudomonadota</taxon>
        <taxon>Betaproteobacteria</taxon>
        <taxon>Burkholderiales</taxon>
        <taxon>Alcaligenaceae</taxon>
        <taxon>Bordetella</taxon>
    </lineage>
</organism>
<gene>
    <name evidence="1" type="primary">secA1</name>
    <name type="ordered locus">BAV2869</name>
</gene>
<protein>
    <recommendedName>
        <fullName evidence="1">Protein translocase subunit SecA 1</fullName>
        <ecNumber evidence="1">7.4.2.8</ecNumber>
    </recommendedName>
</protein>
<comment type="function">
    <text evidence="1">Part of the Sec protein translocase complex. Interacts with the SecYEG preprotein conducting channel. Has a central role in coupling the hydrolysis of ATP to the transfer of proteins into and across the cell membrane, serving both as a receptor for the preprotein-SecB complex and as an ATP-driven molecular motor driving the stepwise translocation of polypeptide chains across the membrane.</text>
</comment>
<comment type="catalytic activity">
    <reaction evidence="1">
        <text>ATP + H2O + cellular proteinSide 1 = ADP + phosphate + cellular proteinSide 2.</text>
        <dbReference type="EC" id="7.4.2.8"/>
    </reaction>
</comment>
<comment type="cofactor">
    <cofactor evidence="1">
        <name>Zn(2+)</name>
        <dbReference type="ChEBI" id="CHEBI:29105"/>
    </cofactor>
    <text evidence="1">May bind 1 zinc ion per subunit.</text>
</comment>
<comment type="subunit">
    <text evidence="1">Monomer and homodimer. Part of the essential Sec protein translocation apparatus which comprises SecA, SecYEG and auxiliary proteins SecDF-YajC and YidC.</text>
</comment>
<comment type="subcellular location">
    <subcellularLocation>
        <location evidence="1">Cell inner membrane</location>
        <topology evidence="1">Peripheral membrane protein</topology>
        <orientation evidence="1">Cytoplasmic side</orientation>
    </subcellularLocation>
    <subcellularLocation>
        <location evidence="1">Cytoplasm</location>
    </subcellularLocation>
    <text evidence="1">Distribution is 50-50.</text>
</comment>
<comment type="similarity">
    <text evidence="1">Belongs to the SecA family.</text>
</comment>
<reference key="1">
    <citation type="journal article" date="2006" name="J. Bacteriol.">
        <title>Comparison of the genome sequence of the poultry pathogen Bordetella avium with those of B. bronchiseptica, B. pertussis, and B. parapertussis reveals extensive diversity in surface structures associated with host interaction.</title>
        <authorList>
            <person name="Sebaihia M."/>
            <person name="Preston A."/>
            <person name="Maskell D.J."/>
            <person name="Kuzmiak H."/>
            <person name="Connell T.D."/>
            <person name="King N.D."/>
            <person name="Orndorff P.E."/>
            <person name="Miyamoto D.M."/>
            <person name="Thomson N.R."/>
            <person name="Harris D."/>
            <person name="Goble A."/>
            <person name="Lord A."/>
            <person name="Murphy L."/>
            <person name="Quail M.A."/>
            <person name="Rutter S."/>
            <person name="Squares R."/>
            <person name="Squares S."/>
            <person name="Woodward J."/>
            <person name="Parkhill J."/>
            <person name="Temple L.M."/>
        </authorList>
    </citation>
    <scope>NUCLEOTIDE SEQUENCE [LARGE SCALE GENOMIC DNA]</scope>
    <source>
        <strain>197N</strain>
    </source>
</reference>
<keyword id="KW-0067">ATP-binding</keyword>
<keyword id="KW-0997">Cell inner membrane</keyword>
<keyword id="KW-1003">Cell membrane</keyword>
<keyword id="KW-0963">Cytoplasm</keyword>
<keyword id="KW-0472">Membrane</keyword>
<keyword id="KW-0479">Metal-binding</keyword>
<keyword id="KW-0547">Nucleotide-binding</keyword>
<keyword id="KW-0653">Protein transport</keyword>
<keyword id="KW-1185">Reference proteome</keyword>
<keyword id="KW-1278">Translocase</keyword>
<keyword id="KW-0811">Translocation</keyword>
<keyword id="KW-0813">Transport</keyword>
<keyword id="KW-0862">Zinc</keyword>
<sequence>MVSLLKKLIGSRNDRLLKQYRKLVTQINNLEPQIAALSDEALQAKTQEFRDRHAKGTSLDDLLPEAFAVVREAGKRVFGMRHFDAQLLGGIALHNGKIAEMRTGEGKTLMATLPVYLNAIAAKGVHVVTVNDYLARRDADWMGRLYRFLGMSTGVVVPQQPNEEKIAAYRADITYGTNNEFGFDYLRDNMEYRVEDRRQRGLAYAIVDEVDSILIDEARTPLIISGQAEDHTELYVRMNAVPPLLKRMAGEPKPHEPEPEGDYWVDEKSQQVHLSESGHESAEKILTRLGILPEGESLYDPRHIALMHHMMVALRAHTLFFLDQQYVIQDGEVVIVDEFTGRLMAGRRWSDGLHQAVEAKEGVKIQHENQTLASITFQNYFRMYEKLSGMTGTADTEAYEFQEIYSLETVIIPTNKPMQRKDQNDQVFRTSQEKYNAILNDIRDCHERGQPVLVGTTSIENSELLSGLLKKAKLPHEVLNAKQHAREAEIVAEAGKPGHITIATNMAGRGTDIVLGGSVEKQIDLIRADENLSEAEKTARIERVRQEWKPLNEQVKAAGGLRIIGTERHESRRIDNQLRGRAGRQGDPGSSRFYLSLEDPLMRIFAGDRVRAIMERLKLPEGEPIEAGMVTRSIETAQRKVEGRNFDIRKQLLEYDDVANDQRKVLYAQRNDVLEAKTIGASVENLRDAAVTELFRGFVPAESVEEQWDIAGLQQALASDWQLQLPLAEMVEAEPKLTDEELLERVLQAARDTYRSKSELVGEESWGQFERSIMLQSIDTHWREHLSALDYLRQGIHLRGYAQKNPKQEYKREAFELFSGMLDRIRDDVVRVLMTVRVQSTEQVAQAEAEAAQSHVQNVQFHHSDYDEALASEAAEAQEPVRNVLPKVGRNDACPCGSGKKYKQCHGKLT</sequence>
<feature type="chain" id="PRO_0000318328" description="Protein translocase subunit SecA 1">
    <location>
        <begin position="1"/>
        <end position="910"/>
    </location>
</feature>
<feature type="binding site" evidence="1">
    <location>
        <position position="86"/>
    </location>
    <ligand>
        <name>ATP</name>
        <dbReference type="ChEBI" id="CHEBI:30616"/>
    </ligand>
</feature>
<feature type="binding site" evidence="1">
    <location>
        <begin position="104"/>
        <end position="108"/>
    </location>
    <ligand>
        <name>ATP</name>
        <dbReference type="ChEBI" id="CHEBI:30616"/>
    </ligand>
</feature>
<feature type="binding site" evidence="1">
    <location>
        <position position="512"/>
    </location>
    <ligand>
        <name>ATP</name>
        <dbReference type="ChEBI" id="CHEBI:30616"/>
    </ligand>
</feature>
<feature type="binding site" evidence="1">
    <location>
        <position position="894"/>
    </location>
    <ligand>
        <name>Zn(2+)</name>
        <dbReference type="ChEBI" id="CHEBI:29105"/>
    </ligand>
</feature>
<feature type="binding site" evidence="1">
    <location>
        <position position="896"/>
    </location>
    <ligand>
        <name>Zn(2+)</name>
        <dbReference type="ChEBI" id="CHEBI:29105"/>
    </ligand>
</feature>
<feature type="binding site" evidence="1">
    <location>
        <position position="905"/>
    </location>
    <ligand>
        <name>Zn(2+)</name>
        <dbReference type="ChEBI" id="CHEBI:29105"/>
    </ligand>
</feature>
<feature type="binding site" evidence="1">
    <location>
        <position position="906"/>
    </location>
    <ligand>
        <name>Zn(2+)</name>
        <dbReference type="ChEBI" id="CHEBI:29105"/>
    </ligand>
</feature>
<dbReference type="EC" id="7.4.2.8" evidence="1"/>
<dbReference type="EMBL" id="AM167904">
    <property type="protein sequence ID" value="CAJ50479.1"/>
    <property type="molecule type" value="Genomic_DNA"/>
</dbReference>
<dbReference type="RefSeq" id="WP_012418509.1">
    <property type="nucleotide sequence ID" value="NC_010645.1"/>
</dbReference>
<dbReference type="SMR" id="Q2KVH9"/>
<dbReference type="STRING" id="360910.BAV2869"/>
<dbReference type="KEGG" id="bav:BAV2869"/>
<dbReference type="eggNOG" id="COG0653">
    <property type="taxonomic scope" value="Bacteria"/>
</dbReference>
<dbReference type="HOGENOM" id="CLU_005314_3_0_4"/>
<dbReference type="OrthoDB" id="9805579at2"/>
<dbReference type="Proteomes" id="UP000001977">
    <property type="component" value="Chromosome"/>
</dbReference>
<dbReference type="GO" id="GO:0031522">
    <property type="term" value="C:cell envelope Sec protein transport complex"/>
    <property type="evidence" value="ECO:0007669"/>
    <property type="project" value="TreeGrafter"/>
</dbReference>
<dbReference type="GO" id="GO:0005829">
    <property type="term" value="C:cytosol"/>
    <property type="evidence" value="ECO:0007669"/>
    <property type="project" value="TreeGrafter"/>
</dbReference>
<dbReference type="GO" id="GO:0005886">
    <property type="term" value="C:plasma membrane"/>
    <property type="evidence" value="ECO:0007669"/>
    <property type="project" value="UniProtKB-SubCell"/>
</dbReference>
<dbReference type="GO" id="GO:0005524">
    <property type="term" value="F:ATP binding"/>
    <property type="evidence" value="ECO:0007669"/>
    <property type="project" value="UniProtKB-UniRule"/>
</dbReference>
<dbReference type="GO" id="GO:0046872">
    <property type="term" value="F:metal ion binding"/>
    <property type="evidence" value="ECO:0007669"/>
    <property type="project" value="UniProtKB-KW"/>
</dbReference>
<dbReference type="GO" id="GO:0008564">
    <property type="term" value="F:protein-exporting ATPase activity"/>
    <property type="evidence" value="ECO:0007669"/>
    <property type="project" value="UniProtKB-EC"/>
</dbReference>
<dbReference type="GO" id="GO:0065002">
    <property type="term" value="P:intracellular protein transmembrane transport"/>
    <property type="evidence" value="ECO:0007669"/>
    <property type="project" value="UniProtKB-UniRule"/>
</dbReference>
<dbReference type="GO" id="GO:0017038">
    <property type="term" value="P:protein import"/>
    <property type="evidence" value="ECO:0007669"/>
    <property type="project" value="InterPro"/>
</dbReference>
<dbReference type="GO" id="GO:0006605">
    <property type="term" value="P:protein targeting"/>
    <property type="evidence" value="ECO:0007669"/>
    <property type="project" value="UniProtKB-UniRule"/>
</dbReference>
<dbReference type="GO" id="GO:0043952">
    <property type="term" value="P:protein transport by the Sec complex"/>
    <property type="evidence" value="ECO:0007669"/>
    <property type="project" value="TreeGrafter"/>
</dbReference>
<dbReference type="CDD" id="cd17928">
    <property type="entry name" value="DEXDc_SecA"/>
    <property type="match status" value="1"/>
</dbReference>
<dbReference type="CDD" id="cd18803">
    <property type="entry name" value="SF2_C_secA"/>
    <property type="match status" value="1"/>
</dbReference>
<dbReference type="FunFam" id="3.40.50.300:FF:000113">
    <property type="entry name" value="Preprotein translocase subunit SecA"/>
    <property type="match status" value="1"/>
</dbReference>
<dbReference type="FunFam" id="3.90.1440.10:FF:000001">
    <property type="entry name" value="Preprotein translocase subunit SecA"/>
    <property type="match status" value="1"/>
</dbReference>
<dbReference type="FunFam" id="1.10.3060.10:FF:000003">
    <property type="entry name" value="Protein translocase subunit SecA"/>
    <property type="match status" value="1"/>
</dbReference>
<dbReference type="Gene3D" id="1.10.3060.10">
    <property type="entry name" value="Helical scaffold and wing domains of SecA"/>
    <property type="match status" value="1"/>
</dbReference>
<dbReference type="Gene3D" id="3.40.50.300">
    <property type="entry name" value="P-loop containing nucleotide triphosphate hydrolases"/>
    <property type="match status" value="2"/>
</dbReference>
<dbReference type="Gene3D" id="3.90.1440.10">
    <property type="entry name" value="SecA, preprotein cross-linking domain"/>
    <property type="match status" value="1"/>
</dbReference>
<dbReference type="HAMAP" id="MF_01382">
    <property type="entry name" value="SecA"/>
    <property type="match status" value="1"/>
</dbReference>
<dbReference type="InterPro" id="IPR014001">
    <property type="entry name" value="Helicase_ATP-bd"/>
</dbReference>
<dbReference type="InterPro" id="IPR001650">
    <property type="entry name" value="Helicase_C-like"/>
</dbReference>
<dbReference type="InterPro" id="IPR027417">
    <property type="entry name" value="P-loop_NTPase"/>
</dbReference>
<dbReference type="InterPro" id="IPR004027">
    <property type="entry name" value="SEC_C_motif"/>
</dbReference>
<dbReference type="InterPro" id="IPR000185">
    <property type="entry name" value="SecA"/>
</dbReference>
<dbReference type="InterPro" id="IPR020937">
    <property type="entry name" value="SecA_CS"/>
</dbReference>
<dbReference type="InterPro" id="IPR011115">
    <property type="entry name" value="SecA_DEAD"/>
</dbReference>
<dbReference type="InterPro" id="IPR014018">
    <property type="entry name" value="SecA_motor_DEAD"/>
</dbReference>
<dbReference type="InterPro" id="IPR011130">
    <property type="entry name" value="SecA_preprotein_X-link_dom"/>
</dbReference>
<dbReference type="InterPro" id="IPR044722">
    <property type="entry name" value="SecA_SF2_C"/>
</dbReference>
<dbReference type="InterPro" id="IPR011116">
    <property type="entry name" value="SecA_Wing/Scaffold"/>
</dbReference>
<dbReference type="InterPro" id="IPR036266">
    <property type="entry name" value="SecA_Wing/Scaffold_sf"/>
</dbReference>
<dbReference type="InterPro" id="IPR036670">
    <property type="entry name" value="SecA_X-link_sf"/>
</dbReference>
<dbReference type="NCBIfam" id="NF009538">
    <property type="entry name" value="PRK12904.1"/>
    <property type="match status" value="1"/>
</dbReference>
<dbReference type="NCBIfam" id="TIGR00963">
    <property type="entry name" value="secA"/>
    <property type="match status" value="1"/>
</dbReference>
<dbReference type="PANTHER" id="PTHR30612:SF0">
    <property type="entry name" value="CHLOROPLAST PROTEIN-TRANSPORTING ATPASE"/>
    <property type="match status" value="1"/>
</dbReference>
<dbReference type="PANTHER" id="PTHR30612">
    <property type="entry name" value="SECA INNER MEMBRANE COMPONENT OF SEC PROTEIN SECRETION SYSTEM"/>
    <property type="match status" value="1"/>
</dbReference>
<dbReference type="Pfam" id="PF21090">
    <property type="entry name" value="P-loop_SecA"/>
    <property type="match status" value="1"/>
</dbReference>
<dbReference type="Pfam" id="PF02810">
    <property type="entry name" value="SEC-C"/>
    <property type="match status" value="1"/>
</dbReference>
<dbReference type="Pfam" id="PF07517">
    <property type="entry name" value="SecA_DEAD"/>
    <property type="match status" value="1"/>
</dbReference>
<dbReference type="Pfam" id="PF01043">
    <property type="entry name" value="SecA_PP_bind"/>
    <property type="match status" value="1"/>
</dbReference>
<dbReference type="Pfam" id="PF07516">
    <property type="entry name" value="SecA_SW"/>
    <property type="match status" value="1"/>
</dbReference>
<dbReference type="PRINTS" id="PR00906">
    <property type="entry name" value="SECA"/>
</dbReference>
<dbReference type="SMART" id="SM00957">
    <property type="entry name" value="SecA_DEAD"/>
    <property type="match status" value="1"/>
</dbReference>
<dbReference type="SMART" id="SM00958">
    <property type="entry name" value="SecA_PP_bind"/>
    <property type="match status" value="1"/>
</dbReference>
<dbReference type="SUPFAM" id="SSF81886">
    <property type="entry name" value="Helical scaffold and wing domains of SecA"/>
    <property type="match status" value="1"/>
</dbReference>
<dbReference type="SUPFAM" id="SSF52540">
    <property type="entry name" value="P-loop containing nucleoside triphosphate hydrolases"/>
    <property type="match status" value="2"/>
</dbReference>
<dbReference type="SUPFAM" id="SSF81767">
    <property type="entry name" value="Pre-protein crosslinking domain of SecA"/>
    <property type="match status" value="1"/>
</dbReference>
<dbReference type="PROSITE" id="PS01312">
    <property type="entry name" value="SECA"/>
    <property type="match status" value="1"/>
</dbReference>
<dbReference type="PROSITE" id="PS51196">
    <property type="entry name" value="SECA_MOTOR_DEAD"/>
    <property type="match status" value="1"/>
</dbReference>
<accession>Q2KVH9</accession>
<evidence type="ECO:0000255" key="1">
    <source>
        <dbReference type="HAMAP-Rule" id="MF_01382"/>
    </source>
</evidence>
<proteinExistence type="inferred from homology"/>